<reference key="1">
    <citation type="journal article" date="1998" name="Science">
        <title>Genome sequence of the nematode C. elegans: a platform for investigating biology.</title>
        <authorList>
            <consortium name="The C. elegans sequencing consortium"/>
        </authorList>
    </citation>
    <scope>NUCLEOTIDE SEQUENCE [LARGE SCALE GENOMIC DNA]</scope>
    <source>
        <strain>Bristol N2</strain>
    </source>
</reference>
<reference key="2">
    <citation type="journal article" date="2007" name="Biochem. J.">
        <title>Phosphoethanolamine N-methyltransferase (PMT-1) catalyses the first reaction of a new pathway for phosphocholine biosynthesis in Caenorhabditis elegans.</title>
        <authorList>
            <person name="Brendza K.M."/>
            <person name="Haakenson W."/>
            <person name="Cahoon R.E."/>
            <person name="Hicks L.M."/>
            <person name="Palavalli L.H."/>
            <person name="Chiapelli B.J."/>
            <person name="McLaird M."/>
            <person name="McCarter J.P."/>
            <person name="Williams D.J."/>
            <person name="Hresko M.C."/>
            <person name="Jez J.M."/>
        </authorList>
    </citation>
    <scope>FUNCTION</scope>
    <scope>CATALYTIC ACTIVITY</scope>
    <scope>BIOPHYSICOCHEMICAL PROPERTIES</scope>
    <scope>DISRUPTION PHENOTYPE</scope>
    <scope>PATHWAY</scope>
</reference>
<gene>
    <name evidence="4 5" type="primary">pmt-1</name>
    <name evidence="5" type="ORF">ZK622.3</name>
</gene>
<accession>Q23552</accession>
<accession>H2KZF5</accession>
<accession>Q86NB3</accession>
<proteinExistence type="evidence at protein level"/>
<dbReference type="EC" id="2.1.1.103" evidence="1"/>
<dbReference type="EMBL" id="BX284602">
    <property type="protein sequence ID" value="CCD68005.1"/>
    <property type="molecule type" value="Genomic_DNA"/>
</dbReference>
<dbReference type="EMBL" id="BX284602">
    <property type="protein sequence ID" value="CCD68006.1"/>
    <property type="molecule type" value="Genomic_DNA"/>
</dbReference>
<dbReference type="EMBL" id="BX284602">
    <property type="protein sequence ID" value="CCD68008.1"/>
    <property type="molecule type" value="Genomic_DNA"/>
</dbReference>
<dbReference type="PIR" id="T27936">
    <property type="entry name" value="T27936"/>
</dbReference>
<dbReference type="RefSeq" id="NP_001379829.1">
    <molecule id="Q23552-3"/>
    <property type="nucleotide sequence ID" value="NM_001393066.1"/>
</dbReference>
<dbReference type="RefSeq" id="NP_494990.2">
    <molecule id="Q23552-1"/>
    <property type="nucleotide sequence ID" value="NM_062589.6"/>
</dbReference>
<dbReference type="RefSeq" id="NP_494991.1">
    <molecule id="Q23552-2"/>
    <property type="nucleotide sequence ID" value="NM_062590.4"/>
</dbReference>
<dbReference type="RefSeq" id="NP_871998.1">
    <property type="nucleotide sequence ID" value="NM_182198.6"/>
</dbReference>
<dbReference type="SMR" id="Q23552"/>
<dbReference type="FunCoup" id="Q23552">
    <property type="interactions" value="8"/>
</dbReference>
<dbReference type="STRING" id="6239.ZK622.3b.1"/>
<dbReference type="BindingDB" id="Q23552"/>
<dbReference type="SwissLipids" id="SLP:000000513"/>
<dbReference type="PaxDb" id="6239-ZK622.3b"/>
<dbReference type="PeptideAtlas" id="Q23552"/>
<dbReference type="EnsemblMetazoa" id="ZK622.3a.1">
    <molecule id="Q23552-1"/>
    <property type="protein sequence ID" value="ZK622.3a.1"/>
    <property type="gene ID" value="WBGene00022781"/>
</dbReference>
<dbReference type="EnsemblMetazoa" id="ZK622.3a.2">
    <molecule id="Q23552-1"/>
    <property type="protein sequence ID" value="ZK622.3a.2"/>
    <property type="gene ID" value="WBGene00022781"/>
</dbReference>
<dbReference type="EnsemblMetazoa" id="ZK622.3b.1">
    <molecule id="Q23552-2"/>
    <property type="protein sequence ID" value="ZK622.3b.1"/>
    <property type="gene ID" value="WBGene00022781"/>
</dbReference>
<dbReference type="EnsemblMetazoa" id="ZK622.3d.1">
    <molecule id="Q23552-3"/>
    <property type="protein sequence ID" value="ZK622.3d.1"/>
    <property type="gene ID" value="WBGene00022781"/>
</dbReference>
<dbReference type="EnsemblMetazoa" id="ZK622.3d.2">
    <molecule id="Q23552-3"/>
    <property type="protein sequence ID" value="ZK622.3d.2"/>
    <property type="gene ID" value="WBGene00022781"/>
</dbReference>
<dbReference type="EnsemblMetazoa" id="ZK622.3d.3">
    <molecule id="Q23552-3"/>
    <property type="protein sequence ID" value="ZK622.3d.3"/>
    <property type="gene ID" value="WBGene00022781"/>
</dbReference>
<dbReference type="EnsemblMetazoa" id="ZK622.3d.4">
    <molecule id="Q23552-3"/>
    <property type="protein sequence ID" value="ZK622.3d.4"/>
    <property type="gene ID" value="WBGene00022781"/>
</dbReference>
<dbReference type="GeneID" id="173901"/>
<dbReference type="KEGG" id="cel:CELE_ZK622.3"/>
<dbReference type="UCSC" id="ZK622.3a.1">
    <property type="organism name" value="c. elegans"/>
</dbReference>
<dbReference type="AGR" id="WB:WBGene00022781"/>
<dbReference type="CTD" id="173901"/>
<dbReference type="WormBase" id="ZK622.3a">
    <molecule id="Q23552-1"/>
    <property type="protein sequence ID" value="CE33504"/>
    <property type="gene ID" value="WBGene00022781"/>
    <property type="gene designation" value="pmt-1"/>
</dbReference>
<dbReference type="WormBase" id="ZK622.3b">
    <molecule id="Q23552-2"/>
    <property type="protein sequence ID" value="CE29162"/>
    <property type="gene ID" value="WBGene00022781"/>
    <property type="gene designation" value="pmt-1"/>
</dbReference>
<dbReference type="WormBase" id="ZK622.3d">
    <molecule id="Q23552-3"/>
    <property type="protein sequence ID" value="CE33505"/>
    <property type="gene ID" value="WBGene00022781"/>
    <property type="gene designation" value="pmt-1"/>
</dbReference>
<dbReference type="eggNOG" id="KOG1269">
    <property type="taxonomic scope" value="Eukaryota"/>
</dbReference>
<dbReference type="GeneTree" id="ENSGT00940000172618"/>
<dbReference type="HOGENOM" id="CLU_044637_0_0_1"/>
<dbReference type="InParanoid" id="Q23552"/>
<dbReference type="OMA" id="VIRKNWV"/>
<dbReference type="OrthoDB" id="8300214at2759"/>
<dbReference type="PRO" id="PR:Q23552"/>
<dbReference type="Proteomes" id="UP000001940">
    <property type="component" value="Chromosome II"/>
</dbReference>
<dbReference type="Bgee" id="WBGene00022781">
    <property type="expression patterns" value="Expressed in larva and 4 other cell types or tissues"/>
</dbReference>
<dbReference type="ExpressionAtlas" id="Q23552">
    <property type="expression patterns" value="baseline and differential"/>
</dbReference>
<dbReference type="GO" id="GO:0005829">
    <property type="term" value="C:cytosol"/>
    <property type="evidence" value="ECO:0000250"/>
    <property type="project" value="WormBase"/>
</dbReference>
<dbReference type="GO" id="GO:0008170">
    <property type="term" value="F:N-methyltransferase activity"/>
    <property type="evidence" value="ECO:0000318"/>
    <property type="project" value="GO_Central"/>
</dbReference>
<dbReference type="GO" id="GO:0000234">
    <property type="term" value="F:phosphoethanolamine N-methyltransferase activity"/>
    <property type="evidence" value="ECO:0000314"/>
    <property type="project" value="WormBase"/>
</dbReference>
<dbReference type="GO" id="GO:0048609">
    <property type="term" value="P:multicellular organismal reproductive process"/>
    <property type="evidence" value="ECO:0000315"/>
    <property type="project" value="WormBase"/>
</dbReference>
<dbReference type="GO" id="GO:0002119">
    <property type="term" value="P:nematode larval development"/>
    <property type="evidence" value="ECO:0000315"/>
    <property type="project" value="WormBase"/>
</dbReference>
<dbReference type="GO" id="GO:0070832">
    <property type="term" value="P:phosphatidylcholine biosynthesis from phosphoryl-ethanolamine via N-dimethylethanolamine phosphate and CDP-choline"/>
    <property type="evidence" value="ECO:0000314"/>
    <property type="project" value="WormBase"/>
</dbReference>
<dbReference type="GO" id="GO:0006656">
    <property type="term" value="P:phosphatidylcholine biosynthetic process"/>
    <property type="evidence" value="ECO:0000318"/>
    <property type="project" value="GO_Central"/>
</dbReference>
<dbReference type="CDD" id="cd02440">
    <property type="entry name" value="AdoMet_MTases"/>
    <property type="match status" value="1"/>
</dbReference>
<dbReference type="FunFam" id="3.40.50.150:FF:000712">
    <property type="entry name" value="Phosphoethanolamine MethylTransferase"/>
    <property type="match status" value="1"/>
</dbReference>
<dbReference type="Gene3D" id="3.40.50.12180">
    <property type="match status" value="1"/>
</dbReference>
<dbReference type="Gene3D" id="3.40.50.150">
    <property type="entry name" value="Vaccinia Virus protein VP39"/>
    <property type="match status" value="1"/>
</dbReference>
<dbReference type="InterPro" id="IPR041698">
    <property type="entry name" value="Methyltransf_25"/>
</dbReference>
<dbReference type="InterPro" id="IPR029063">
    <property type="entry name" value="SAM-dependent_MTases_sf"/>
</dbReference>
<dbReference type="PANTHER" id="PTHR44307">
    <property type="entry name" value="PHOSPHOETHANOLAMINE METHYLTRANSFERASE"/>
    <property type="match status" value="1"/>
</dbReference>
<dbReference type="PANTHER" id="PTHR44307:SF18">
    <property type="entry name" value="PHOSPHOETHANOLAMINE N-METHYLTRANSFERASE 1"/>
    <property type="match status" value="1"/>
</dbReference>
<dbReference type="Pfam" id="PF13649">
    <property type="entry name" value="Methyltransf_25"/>
    <property type="match status" value="1"/>
</dbReference>
<dbReference type="SUPFAM" id="SSF53335">
    <property type="entry name" value="S-adenosyl-L-methionine-dependent methyltransferases"/>
    <property type="match status" value="1"/>
</dbReference>
<name>PMT1_CAEEL</name>
<comment type="function">
    <text evidence="1">Catalyzes the first step in the synthesis of phosphocholine by converting phosphoethanolamine into phospho-monomethylethanolamine (N-methylethanolamine phosphate). Phosphocholine is a precursor for phosphatidylcholine, a major component in membranes and a precursor itself in the production of glycoconjugates secreted by parasitic nematodes to avoid host immune responses.</text>
</comment>
<comment type="catalytic activity">
    <reaction evidence="1">
        <text>phosphoethanolamine + S-adenosyl-L-methionine = N-methylethanolamine phosphate + S-adenosyl-L-homocysteine + H(+)</text>
        <dbReference type="Rhea" id="RHEA:20365"/>
        <dbReference type="ChEBI" id="CHEBI:15378"/>
        <dbReference type="ChEBI" id="CHEBI:57781"/>
        <dbReference type="ChEBI" id="CHEBI:57856"/>
        <dbReference type="ChEBI" id="CHEBI:58190"/>
        <dbReference type="ChEBI" id="CHEBI:59789"/>
        <dbReference type="EC" id="2.1.1.103"/>
    </reaction>
    <physiologicalReaction direction="left-to-right" evidence="1">
        <dbReference type="Rhea" id="RHEA:20366"/>
    </physiologicalReaction>
</comment>
<comment type="activity regulation">
    <text evidence="1">Feedback inhibition by phosphatidylcholine.</text>
</comment>
<comment type="biophysicochemical properties">
    <kinetics>
        <KM evidence="1">145 uM for S-adenosyl-L-methionine</KM>
        <KM evidence="1">9.9 uM for phosphoethanolamine</KM>
    </kinetics>
</comment>
<comment type="pathway">
    <text evidence="1">Phospholipid metabolism; phosphatidylcholine biosynthesis; phosphocholine from phosphoethanolamine.</text>
</comment>
<comment type="alternative products">
    <event type="alternative splicing"/>
    <isoform>
        <id>Q23552-1</id>
        <name>1</name>
        <sequence type="displayed"/>
    </isoform>
    <isoform>
        <id>Q23552-2</id>
        <name>2</name>
        <sequence type="described" ref="VSP_061097"/>
    </isoform>
    <isoform>
        <id>Q23552-3</id>
        <name>3</name>
        <sequence type="described" ref="VSP_061096"/>
    </isoform>
</comment>
<comment type="disruption phenotype">
    <text evidence="1">Necessary at multiple stages in the worm's life cycle, its disruption alters worm growth and development.</text>
</comment>
<comment type="similarity">
    <text evidence="3">Belongs to the class I-like SAM-binding methyltransferase superfamily.</text>
</comment>
<sequence length="475" mass="55148">MSTDQQSSVEDQTVAMVNVRRANFKSFWDKYSDKPDTNSMMLNHSAEELESSDRADILASLPLLHNKDVVDIGAGIGRFTTVLAETARWVLSTDFIDSFIKKNQERNAHLGNINYQVGDAVGLKMESNSVDLVFTNWLMMYLSDEETVEFIFNCMRWLRSHGIVHLRESCSEPSTGRSKAKSMHDTANANPTHYRFSSLYINLLRAIRYRDVDNKLWRFNVQWSCSVPTYIKRSNNWRQVHWLAEKVPAEDGAKGTSFNELVELIKNTWQNEQEAWDAKLDDEKYVWTDKVFSSALTSLPSNSTFFLYTPRTVSPYCHINAHTLAETFNANVWNTEIIPEYYRTSLTKSNNLKDQRVRFGWNQSLTDSVTYWQQKDALFDVFVATEFLSTVDDETIRQLPNVMSDGAKFITLEPVDEVNEAEMKQRIQELGYTLKSFTDVTDQCIEAQEQYFKDHEQLRDEKVIRKNWVLLELTH</sequence>
<protein>
    <recommendedName>
        <fullName evidence="2">Phosphoethanolamine N-methyltransferase 1</fullName>
        <shortName>PEAMT-1</shortName>
        <shortName evidence="2">PMT-1</shortName>
        <ecNumber evidence="1">2.1.1.103</ecNumber>
    </recommendedName>
    <alternativeName>
        <fullName evidence="4">Methyltransf_25 domain-containing protein</fullName>
    </alternativeName>
    <alternativeName>
        <fullName evidence="2">S-adenosyl-L-methionine:phosphoethanolamine N-methyltransferase</fullName>
    </alternativeName>
</protein>
<keyword id="KW-0025">Alternative splicing</keyword>
<keyword id="KW-0444">Lipid biosynthesis</keyword>
<keyword id="KW-0443">Lipid metabolism</keyword>
<keyword id="KW-0594">Phospholipid biosynthesis</keyword>
<keyword id="KW-1208">Phospholipid metabolism</keyword>
<keyword id="KW-1185">Reference proteome</keyword>
<keyword id="KW-0949">S-adenosyl-L-methionine</keyword>
<keyword id="KW-0808">Transferase</keyword>
<organism>
    <name type="scientific">Caenorhabditis elegans</name>
    <dbReference type="NCBI Taxonomy" id="6239"/>
    <lineage>
        <taxon>Eukaryota</taxon>
        <taxon>Metazoa</taxon>
        <taxon>Ecdysozoa</taxon>
        <taxon>Nematoda</taxon>
        <taxon>Chromadorea</taxon>
        <taxon>Rhabditida</taxon>
        <taxon>Rhabditina</taxon>
        <taxon>Rhabditomorpha</taxon>
        <taxon>Rhabditoidea</taxon>
        <taxon>Rhabditidae</taxon>
        <taxon>Peloderinae</taxon>
        <taxon>Caenorhabditis</taxon>
    </lineage>
</organism>
<evidence type="ECO:0000269" key="1">
    <source>
    </source>
</evidence>
<evidence type="ECO:0000303" key="2">
    <source>
    </source>
</evidence>
<evidence type="ECO:0000305" key="3"/>
<evidence type="ECO:0000312" key="4">
    <source>
        <dbReference type="EMBL" id="CCD68005.1"/>
    </source>
</evidence>
<evidence type="ECO:0000312" key="5">
    <source>
        <dbReference type="WormBase" id="ZK622.3a"/>
    </source>
</evidence>
<feature type="chain" id="PRO_0000452991" description="Phosphoethanolamine N-methyltransferase 1">
    <location>
        <begin position="1"/>
        <end position="475"/>
    </location>
</feature>
<feature type="splice variant" id="VSP_061096" description="In isoform 3.">
    <location>
        <begin position="1"/>
        <end position="15"/>
    </location>
</feature>
<feature type="splice variant" id="VSP_061097" description="In isoform 2.">
    <original>MSTDQQSSVEDQTV</original>
    <variation>MDRYSPYDKTVFLIFCTAYILQK</variation>
    <location>
        <begin position="1"/>
        <end position="14"/>
    </location>
</feature>